<gene>
    <name type="primary">Hsd17b1</name>
    <name type="synonym">Edh17b1</name>
</gene>
<accession>P51657</accession>
<sequence>MDSTVVLITGCSSGIGLHLAVRLASDRSQSFKVYATLRDLKSQGPLLEAARAQGCPPGSLEILELDVRDSESVAAARACVTEGRVDVLVCNAGRGLFGPLEAHELNAVGAVLDVNVLGTIRMLQAFLPDMKRRHSGRVLVTASVGGLMGLPFHEVYCASKFALEGLCESLAILLPLFGVHVSLIECGAVHTAFHEKLEGGPGGALERADAQTRHLFAHYQRGYEQALSEAQDPEEVTELFLTAMRAPQPALRYFSTNRFLPLARMRTEDPSGSSYVEAMHREAFSDLQVQEGAKAGAQVSGDPDTPPRALICLPECAIPRVTAELGWSASDKPGQNKSCYQQKI</sequence>
<protein>
    <recommendedName>
        <fullName>Estradiol 17-beta-dehydrogenase 1</fullName>
        <ecNumber>1.1.1.62</ecNumber>
    </recommendedName>
    <alternativeName>
        <fullName>17-beta-hydroxysteroid dehydrogenase type 1</fullName>
        <shortName>17-beta-HSD 1</shortName>
    </alternativeName>
</protein>
<proteinExistence type="evidence at protein level"/>
<organism>
    <name type="scientific">Rattus norvegicus</name>
    <name type="common">Rat</name>
    <dbReference type="NCBI Taxonomy" id="10116"/>
    <lineage>
        <taxon>Eukaryota</taxon>
        <taxon>Metazoa</taxon>
        <taxon>Chordata</taxon>
        <taxon>Craniata</taxon>
        <taxon>Vertebrata</taxon>
        <taxon>Euteleostomi</taxon>
        <taxon>Mammalia</taxon>
        <taxon>Eutheria</taxon>
        <taxon>Euarchontoglires</taxon>
        <taxon>Glires</taxon>
        <taxon>Rodentia</taxon>
        <taxon>Myomorpha</taxon>
        <taxon>Muroidea</taxon>
        <taxon>Muridae</taxon>
        <taxon>Murinae</taxon>
        <taxon>Rattus</taxon>
    </lineage>
</organism>
<evidence type="ECO:0000250" key="1"/>
<evidence type="ECO:0000255" key="2">
    <source>
        <dbReference type="PROSITE-ProRule" id="PRU10001"/>
    </source>
</evidence>
<evidence type="ECO:0000269" key="3">
    <source>
    </source>
</evidence>
<evidence type="ECO:0000305" key="4"/>
<name>DHB1_RAT</name>
<feature type="chain" id="PRO_0000054569" description="Estradiol 17-beta-dehydrogenase 1">
    <location>
        <begin position="1"/>
        <end position="344"/>
    </location>
</feature>
<feature type="active site" description="Proton acceptor" evidence="2">
    <location>
        <position position="156"/>
    </location>
</feature>
<feature type="binding site" evidence="1">
    <location>
        <begin position="3"/>
        <end position="32"/>
    </location>
    <ligand>
        <name>NAD(+)</name>
        <dbReference type="ChEBI" id="CHEBI:57540"/>
    </ligand>
</feature>
<feature type="binding site" evidence="1">
    <location>
        <position position="143"/>
    </location>
    <ligand>
        <name>substrate</name>
    </ligand>
</feature>
<reference key="1">
    <citation type="journal article" date="1994" name="Endocrinology">
        <title>Rat 17 beta-hydroxysteroid dehydrogenase type 1: primary structure and regulation of enzyme expression in rat ovary by diethylstilbestrol and gonadotropins in vivo.</title>
        <authorList>
            <person name="Ghersevich S."/>
            <person name="Nokelainen P."/>
            <person name="Poutanen M."/>
            <person name="Orava M."/>
            <person name="Autio-Harmainen H."/>
            <person name="Rajaniemi H."/>
            <person name="Vihko R."/>
        </authorList>
    </citation>
    <scope>NUCLEOTIDE SEQUENCE [MRNA]</scope>
    <scope>CATALYTIC ACTIVITY</scope>
    <source>
        <strain>Sprague-Dawley</strain>
        <tissue>Ovary</tissue>
    </source>
</reference>
<reference key="2">
    <citation type="journal article" date="1996" name="Endocrinology">
        <title>Cloning of rat 17 beta-hydroxysteroid dehydrogenase type 2 and characterization of tissue distribution and catalytic activity of rat type 1 and type 2 enzymes.</title>
        <authorList>
            <person name="Akinola L.A."/>
            <person name="Poutanen M."/>
            <person name="Vihko R."/>
        </authorList>
    </citation>
    <scope>NUCLEOTIDE SEQUENCE [MRNA]</scope>
    <source>
        <strain>Sprague-Dawley</strain>
        <tissue>Kidney</tissue>
    </source>
</reference>
<reference key="3">
    <citation type="journal article" date="1998" name="Gene">
        <title>Characterization of rat 17 beta-hydroxysteroid dehydrogenase type 1 gene and mRNA transcripts.</title>
        <authorList>
            <person name="Akinola L.A."/>
            <person name="Poutanen M."/>
            <person name="Peltoketo H."/>
            <person name="Vihko R."/>
            <person name="Vihko P."/>
        </authorList>
    </citation>
    <scope>NUCLEOTIDE SEQUENCE [GENOMIC DNA]</scope>
    <source>
        <strain>Sprague-Dawley</strain>
        <tissue>Testis</tissue>
    </source>
</reference>
<reference key="4">
    <citation type="journal article" date="2004" name="Genome Res.">
        <title>The status, quality, and expansion of the NIH full-length cDNA project: the Mammalian Gene Collection (MGC).</title>
        <authorList>
            <consortium name="The MGC Project Team"/>
        </authorList>
    </citation>
    <scope>NUCLEOTIDE SEQUENCE [LARGE SCALE MRNA]</scope>
    <source>
        <tissue>Ovary</tissue>
    </source>
</reference>
<comment type="function">
    <text>Favors the reduction of estrogens and androgens. Uses preferentially NADH.</text>
</comment>
<comment type="catalytic activity">
    <reaction evidence="3">
        <text>17beta-estradiol + NAD(+) = estrone + NADH + H(+)</text>
        <dbReference type="Rhea" id="RHEA:24612"/>
        <dbReference type="ChEBI" id="CHEBI:15378"/>
        <dbReference type="ChEBI" id="CHEBI:16469"/>
        <dbReference type="ChEBI" id="CHEBI:17263"/>
        <dbReference type="ChEBI" id="CHEBI:57540"/>
        <dbReference type="ChEBI" id="CHEBI:57945"/>
        <dbReference type="EC" id="1.1.1.62"/>
    </reaction>
</comment>
<comment type="catalytic activity">
    <reaction evidence="3">
        <text>17beta-estradiol + NADP(+) = estrone + NADPH + H(+)</text>
        <dbReference type="Rhea" id="RHEA:24616"/>
        <dbReference type="ChEBI" id="CHEBI:15378"/>
        <dbReference type="ChEBI" id="CHEBI:16469"/>
        <dbReference type="ChEBI" id="CHEBI:17263"/>
        <dbReference type="ChEBI" id="CHEBI:57783"/>
        <dbReference type="ChEBI" id="CHEBI:58349"/>
        <dbReference type="EC" id="1.1.1.62"/>
    </reaction>
</comment>
<comment type="pathway">
    <text>Steroid biosynthesis; estrogen biosynthesis.</text>
</comment>
<comment type="subunit">
    <text evidence="1">Homodimer.</text>
</comment>
<comment type="subcellular location">
    <subcellularLocation>
        <location>Cytoplasm</location>
    </subcellularLocation>
</comment>
<comment type="similarity">
    <text evidence="4">Belongs to the short-chain dehydrogenases/reductases (SDR) family.</text>
</comment>
<dbReference type="EC" id="1.1.1.62"/>
<dbReference type="EMBL" id="X78811">
    <property type="protein sequence ID" value="CAA55389.1"/>
    <property type="molecule type" value="mRNA"/>
</dbReference>
<dbReference type="EMBL" id="X97754">
    <property type="protein sequence ID" value="CAA66349.1"/>
    <property type="molecule type" value="mRNA"/>
</dbReference>
<dbReference type="EMBL" id="X98038">
    <property type="protein sequence ID" value="CAA66657.1"/>
    <property type="molecule type" value="Genomic_DNA"/>
</dbReference>
<dbReference type="EMBL" id="BC086365">
    <property type="protein sequence ID" value="AAH86365.1"/>
    <property type="molecule type" value="mRNA"/>
</dbReference>
<dbReference type="PIR" id="S57901">
    <property type="entry name" value="S57901"/>
</dbReference>
<dbReference type="RefSeq" id="NP_036983.1">
    <property type="nucleotide sequence ID" value="NM_012851.2"/>
</dbReference>
<dbReference type="SMR" id="P51657"/>
<dbReference type="FunCoup" id="P51657">
    <property type="interactions" value="18"/>
</dbReference>
<dbReference type="STRING" id="10116.ENSRNOP00000026878"/>
<dbReference type="BindingDB" id="P51657"/>
<dbReference type="ChEMBL" id="CHEMBL1914267"/>
<dbReference type="PaxDb" id="10116-ENSRNOP00000026878"/>
<dbReference type="Ensembl" id="ENSRNOT00000026878.6">
    <property type="protein sequence ID" value="ENSRNOP00000026878.5"/>
    <property type="gene ID" value="ENSRNOG00000019830.6"/>
</dbReference>
<dbReference type="GeneID" id="25322"/>
<dbReference type="KEGG" id="rno:25322"/>
<dbReference type="AGR" id="RGD:2836"/>
<dbReference type="CTD" id="3292"/>
<dbReference type="RGD" id="2836">
    <property type="gene designation" value="Hsd17b1"/>
</dbReference>
<dbReference type="eggNOG" id="KOG1205">
    <property type="taxonomic scope" value="Eukaryota"/>
</dbReference>
<dbReference type="GeneTree" id="ENSGT00940000160415"/>
<dbReference type="HOGENOM" id="CLU_010194_2_9_1"/>
<dbReference type="InParanoid" id="P51657"/>
<dbReference type="OMA" id="KGLHRDT"/>
<dbReference type="OrthoDB" id="47007at2759"/>
<dbReference type="PhylomeDB" id="P51657"/>
<dbReference type="Reactome" id="R-RNO-193144">
    <property type="pathway name" value="Estrogen biosynthesis"/>
</dbReference>
<dbReference type="UniPathway" id="UPA00769"/>
<dbReference type="PRO" id="PR:P51657"/>
<dbReference type="Proteomes" id="UP000002494">
    <property type="component" value="Chromosome 10"/>
</dbReference>
<dbReference type="Bgee" id="ENSRNOG00000019830">
    <property type="expression patterns" value="Expressed in ovary and 18 other cell types or tissues"/>
</dbReference>
<dbReference type="GO" id="GO:0005829">
    <property type="term" value="C:cytosol"/>
    <property type="evidence" value="ECO:0000318"/>
    <property type="project" value="GO_Central"/>
</dbReference>
<dbReference type="GO" id="GO:0072582">
    <property type="term" value="F:17-beta-hydroxysteroid dehydrogenase (NADP+) activity"/>
    <property type="evidence" value="ECO:0000266"/>
    <property type="project" value="RGD"/>
</dbReference>
<dbReference type="GO" id="GO:0004303">
    <property type="term" value="F:estradiol 17-beta-dehydrogenase [NAD(P)+] activity"/>
    <property type="evidence" value="ECO:0000314"/>
    <property type="project" value="RGD"/>
</dbReference>
<dbReference type="GO" id="GO:1903924">
    <property type="term" value="F:estradiol binding"/>
    <property type="evidence" value="ECO:0000266"/>
    <property type="project" value="RGD"/>
</dbReference>
<dbReference type="GO" id="GO:0050661">
    <property type="term" value="F:NADP binding"/>
    <property type="evidence" value="ECO:0000266"/>
    <property type="project" value="RGD"/>
</dbReference>
<dbReference type="GO" id="GO:0070401">
    <property type="term" value="F:NADP+ binding"/>
    <property type="evidence" value="ECO:0000266"/>
    <property type="project" value="RGD"/>
</dbReference>
<dbReference type="GO" id="GO:0042803">
    <property type="term" value="F:protein homodimerization activity"/>
    <property type="evidence" value="ECO:0000266"/>
    <property type="project" value="RGD"/>
</dbReference>
<dbReference type="GO" id="GO:0036094">
    <property type="term" value="F:small molecule binding"/>
    <property type="evidence" value="ECO:0000266"/>
    <property type="project" value="RGD"/>
</dbReference>
<dbReference type="GO" id="GO:0005496">
    <property type="term" value="F:steroid binding"/>
    <property type="evidence" value="ECO:0000266"/>
    <property type="project" value="RGD"/>
</dbReference>
<dbReference type="GO" id="GO:0047035">
    <property type="term" value="F:testosterone dehydrogenase (NAD+) activity"/>
    <property type="evidence" value="ECO:0000314"/>
    <property type="project" value="RGD"/>
</dbReference>
<dbReference type="GO" id="GO:0030283">
    <property type="term" value="F:testosterone dehydrogenase [NAD(P)+] activity"/>
    <property type="evidence" value="ECO:0000266"/>
    <property type="project" value="RGD"/>
</dbReference>
<dbReference type="GO" id="GO:0060612">
    <property type="term" value="P:adipose tissue development"/>
    <property type="evidence" value="ECO:0000266"/>
    <property type="project" value="RGD"/>
</dbReference>
<dbReference type="GO" id="GO:0060348">
    <property type="term" value="P:bone development"/>
    <property type="evidence" value="ECO:0000270"/>
    <property type="project" value="RGD"/>
</dbReference>
<dbReference type="GO" id="GO:0071248">
    <property type="term" value="P:cellular response to metal ion"/>
    <property type="evidence" value="ECO:0000270"/>
    <property type="project" value="RGD"/>
</dbReference>
<dbReference type="GO" id="GO:0006703">
    <property type="term" value="P:estrogen biosynthetic process"/>
    <property type="evidence" value="ECO:0000314"/>
    <property type="project" value="RGD"/>
</dbReference>
<dbReference type="GO" id="GO:0010467">
    <property type="term" value="P:gene expression"/>
    <property type="evidence" value="ECO:0000266"/>
    <property type="project" value="RGD"/>
</dbReference>
<dbReference type="GO" id="GO:0006629">
    <property type="term" value="P:lipid metabolic process"/>
    <property type="evidence" value="ECO:0000266"/>
    <property type="project" value="RGD"/>
</dbReference>
<dbReference type="GO" id="GO:0007040">
    <property type="term" value="P:lysosome organization"/>
    <property type="evidence" value="ECO:0000266"/>
    <property type="project" value="RGD"/>
</dbReference>
<dbReference type="GO" id="GO:0007519">
    <property type="term" value="P:skeletal muscle tissue development"/>
    <property type="evidence" value="ECO:0000266"/>
    <property type="project" value="RGD"/>
</dbReference>
<dbReference type="GO" id="GO:0061370">
    <property type="term" value="P:testosterone biosynthetic process"/>
    <property type="evidence" value="ECO:0000314"/>
    <property type="project" value="RGD"/>
</dbReference>
<dbReference type="FunFam" id="3.40.50.720:FF:000323">
    <property type="entry name" value="Estradiol 17-beta-dehydrogenase 1"/>
    <property type="match status" value="1"/>
</dbReference>
<dbReference type="Gene3D" id="3.40.50.720">
    <property type="entry name" value="NAD(P)-binding Rossmann-like Domain"/>
    <property type="match status" value="1"/>
</dbReference>
<dbReference type="InterPro" id="IPR011348">
    <property type="entry name" value="17beta_DH"/>
</dbReference>
<dbReference type="InterPro" id="IPR036291">
    <property type="entry name" value="NAD(P)-bd_dom_sf"/>
</dbReference>
<dbReference type="InterPro" id="IPR020904">
    <property type="entry name" value="Sc_DH/Rdtase_CS"/>
</dbReference>
<dbReference type="InterPro" id="IPR002347">
    <property type="entry name" value="SDR_fam"/>
</dbReference>
<dbReference type="PANTHER" id="PTHR43391:SF15">
    <property type="entry name" value="17-BETA-HYDROXYSTEROID DEHYDROGENASE TYPE 1"/>
    <property type="match status" value="1"/>
</dbReference>
<dbReference type="PANTHER" id="PTHR43391">
    <property type="entry name" value="RETINOL DEHYDROGENASE-RELATED"/>
    <property type="match status" value="1"/>
</dbReference>
<dbReference type="Pfam" id="PF00106">
    <property type="entry name" value="adh_short"/>
    <property type="match status" value="1"/>
</dbReference>
<dbReference type="PIRSF" id="PIRSF000095">
    <property type="entry name" value="17beta-HSD"/>
    <property type="match status" value="1"/>
</dbReference>
<dbReference type="PRINTS" id="PR00081">
    <property type="entry name" value="GDHRDH"/>
</dbReference>
<dbReference type="PRINTS" id="PR00080">
    <property type="entry name" value="SDRFAMILY"/>
</dbReference>
<dbReference type="SUPFAM" id="SSF51735">
    <property type="entry name" value="NAD(P)-binding Rossmann-fold domains"/>
    <property type="match status" value="1"/>
</dbReference>
<dbReference type="PROSITE" id="PS00061">
    <property type="entry name" value="ADH_SHORT"/>
    <property type="match status" value="1"/>
</dbReference>
<keyword id="KW-0963">Cytoplasm</keyword>
<keyword id="KW-0444">Lipid biosynthesis</keyword>
<keyword id="KW-0443">Lipid metabolism</keyword>
<keyword id="KW-0520">NAD</keyword>
<keyword id="KW-0560">Oxidoreductase</keyword>
<keyword id="KW-1185">Reference proteome</keyword>
<keyword id="KW-0752">Steroid biosynthesis</keyword>